<dbReference type="EMBL" id="AE005174">
    <property type="protein sequence ID" value="AAG58359.1"/>
    <property type="molecule type" value="Genomic_DNA"/>
</dbReference>
<dbReference type="EMBL" id="BA000007">
    <property type="protein sequence ID" value="BAB37527.1"/>
    <property type="molecule type" value="Genomic_DNA"/>
</dbReference>
<dbReference type="PIR" id="C85987">
    <property type="entry name" value="C85987"/>
</dbReference>
<dbReference type="PIR" id="H91141">
    <property type="entry name" value="H91141"/>
</dbReference>
<dbReference type="RefSeq" id="NP_312131.1">
    <property type="nucleotide sequence ID" value="NC_002695.1"/>
</dbReference>
<dbReference type="RefSeq" id="WP_000847559.1">
    <property type="nucleotide sequence ID" value="NZ_VOAI01000014.1"/>
</dbReference>
<dbReference type="EMDB" id="EMD-42504"/>
<dbReference type="EMDB" id="EMD-43929"/>
<dbReference type="EMDB" id="EMD-45569"/>
<dbReference type="EMDB" id="EMD-45572"/>
<dbReference type="EMDB" id="EMD-45573"/>
<dbReference type="EMDB" id="EMD-46632"/>
<dbReference type="EMDB" id="EMD-47303"/>
<dbReference type="SMR" id="P0AA12"/>
<dbReference type="STRING" id="155864.Z4589"/>
<dbReference type="GeneID" id="89518067"/>
<dbReference type="GeneID" id="916047"/>
<dbReference type="KEGG" id="ece:Z4589"/>
<dbReference type="KEGG" id="ecs:ECs_4104"/>
<dbReference type="PATRIC" id="fig|386585.9.peg.4285"/>
<dbReference type="eggNOG" id="COG0102">
    <property type="taxonomic scope" value="Bacteria"/>
</dbReference>
<dbReference type="HOGENOM" id="CLU_082184_2_2_6"/>
<dbReference type="OMA" id="HKPIYTP"/>
<dbReference type="Proteomes" id="UP000000558">
    <property type="component" value="Chromosome"/>
</dbReference>
<dbReference type="Proteomes" id="UP000002519">
    <property type="component" value="Chromosome"/>
</dbReference>
<dbReference type="GO" id="GO:0022625">
    <property type="term" value="C:cytosolic large ribosomal subunit"/>
    <property type="evidence" value="ECO:0007669"/>
    <property type="project" value="TreeGrafter"/>
</dbReference>
<dbReference type="GO" id="GO:0003729">
    <property type="term" value="F:mRNA binding"/>
    <property type="evidence" value="ECO:0007669"/>
    <property type="project" value="TreeGrafter"/>
</dbReference>
<dbReference type="GO" id="GO:0003735">
    <property type="term" value="F:structural constituent of ribosome"/>
    <property type="evidence" value="ECO:0007669"/>
    <property type="project" value="InterPro"/>
</dbReference>
<dbReference type="GO" id="GO:0017148">
    <property type="term" value="P:negative regulation of translation"/>
    <property type="evidence" value="ECO:0007669"/>
    <property type="project" value="TreeGrafter"/>
</dbReference>
<dbReference type="GO" id="GO:0006412">
    <property type="term" value="P:translation"/>
    <property type="evidence" value="ECO:0007669"/>
    <property type="project" value="UniProtKB-UniRule"/>
</dbReference>
<dbReference type="CDD" id="cd00392">
    <property type="entry name" value="Ribosomal_L13"/>
    <property type="match status" value="1"/>
</dbReference>
<dbReference type="FunFam" id="3.90.1180.10:FF:000001">
    <property type="entry name" value="50S ribosomal protein L13"/>
    <property type="match status" value="1"/>
</dbReference>
<dbReference type="Gene3D" id="3.90.1180.10">
    <property type="entry name" value="Ribosomal protein L13"/>
    <property type="match status" value="1"/>
</dbReference>
<dbReference type="HAMAP" id="MF_01366">
    <property type="entry name" value="Ribosomal_uL13"/>
    <property type="match status" value="1"/>
</dbReference>
<dbReference type="InterPro" id="IPR005822">
    <property type="entry name" value="Ribosomal_uL13"/>
</dbReference>
<dbReference type="InterPro" id="IPR005823">
    <property type="entry name" value="Ribosomal_uL13_bac-type"/>
</dbReference>
<dbReference type="InterPro" id="IPR023563">
    <property type="entry name" value="Ribosomal_uL13_CS"/>
</dbReference>
<dbReference type="InterPro" id="IPR036899">
    <property type="entry name" value="Ribosomal_uL13_sf"/>
</dbReference>
<dbReference type="NCBIfam" id="TIGR01066">
    <property type="entry name" value="rplM_bact"/>
    <property type="match status" value="1"/>
</dbReference>
<dbReference type="PANTHER" id="PTHR11545:SF2">
    <property type="entry name" value="LARGE RIBOSOMAL SUBUNIT PROTEIN UL13M"/>
    <property type="match status" value="1"/>
</dbReference>
<dbReference type="PANTHER" id="PTHR11545">
    <property type="entry name" value="RIBOSOMAL PROTEIN L13"/>
    <property type="match status" value="1"/>
</dbReference>
<dbReference type="Pfam" id="PF00572">
    <property type="entry name" value="Ribosomal_L13"/>
    <property type="match status" value="1"/>
</dbReference>
<dbReference type="PIRSF" id="PIRSF002181">
    <property type="entry name" value="Ribosomal_L13"/>
    <property type="match status" value="1"/>
</dbReference>
<dbReference type="SUPFAM" id="SSF52161">
    <property type="entry name" value="Ribosomal protein L13"/>
    <property type="match status" value="1"/>
</dbReference>
<dbReference type="PROSITE" id="PS00783">
    <property type="entry name" value="RIBOSOMAL_L13"/>
    <property type="match status" value="1"/>
</dbReference>
<feature type="chain" id="PRO_0000133736" description="Large ribosomal subunit protein uL13">
    <location>
        <begin position="1"/>
        <end position="142"/>
    </location>
</feature>
<keyword id="KW-1185">Reference proteome</keyword>
<keyword id="KW-0687">Ribonucleoprotein</keyword>
<keyword id="KW-0689">Ribosomal protein</keyword>
<protein>
    <recommendedName>
        <fullName evidence="1">Large ribosomal subunit protein uL13</fullName>
    </recommendedName>
    <alternativeName>
        <fullName evidence="2">50S ribosomal protein L13</fullName>
    </alternativeName>
</protein>
<gene>
    <name evidence="1" type="primary">rplM</name>
    <name type="ordered locus">Z4589</name>
    <name type="ordered locus">ECs4104</name>
</gene>
<proteinExistence type="inferred from homology"/>
<sequence>MKTFTAKPETVKRDWYVVDATGKTLGRLATELARRLRGKHKAEYTPHVDTGDYIIVLNADKVAVTGNKRTDKVYYHHTGHIGGIKQATFEEMIARRPERVIEIAVKGMLPKGPLGRAMFRKLKVYAGNEHNHAAQQPQVLDI</sequence>
<reference key="1">
    <citation type="journal article" date="2001" name="Nature">
        <title>Genome sequence of enterohaemorrhagic Escherichia coli O157:H7.</title>
        <authorList>
            <person name="Perna N.T."/>
            <person name="Plunkett G. III"/>
            <person name="Burland V."/>
            <person name="Mau B."/>
            <person name="Glasner J.D."/>
            <person name="Rose D.J."/>
            <person name="Mayhew G.F."/>
            <person name="Evans P.S."/>
            <person name="Gregor J."/>
            <person name="Kirkpatrick H.A."/>
            <person name="Posfai G."/>
            <person name="Hackett J."/>
            <person name="Klink S."/>
            <person name="Boutin A."/>
            <person name="Shao Y."/>
            <person name="Miller L."/>
            <person name="Grotbeck E.J."/>
            <person name="Davis N.W."/>
            <person name="Lim A."/>
            <person name="Dimalanta E.T."/>
            <person name="Potamousis K."/>
            <person name="Apodaca J."/>
            <person name="Anantharaman T.S."/>
            <person name="Lin J."/>
            <person name="Yen G."/>
            <person name="Schwartz D.C."/>
            <person name="Welch R.A."/>
            <person name="Blattner F.R."/>
        </authorList>
    </citation>
    <scope>NUCLEOTIDE SEQUENCE [LARGE SCALE GENOMIC DNA]</scope>
    <source>
        <strain>O157:H7 / EDL933 / ATCC 700927 / EHEC</strain>
    </source>
</reference>
<reference key="2">
    <citation type="journal article" date="2001" name="DNA Res.">
        <title>Complete genome sequence of enterohemorrhagic Escherichia coli O157:H7 and genomic comparison with a laboratory strain K-12.</title>
        <authorList>
            <person name="Hayashi T."/>
            <person name="Makino K."/>
            <person name="Ohnishi M."/>
            <person name="Kurokawa K."/>
            <person name="Ishii K."/>
            <person name="Yokoyama K."/>
            <person name="Han C.-G."/>
            <person name="Ohtsubo E."/>
            <person name="Nakayama K."/>
            <person name="Murata T."/>
            <person name="Tanaka M."/>
            <person name="Tobe T."/>
            <person name="Iida T."/>
            <person name="Takami H."/>
            <person name="Honda T."/>
            <person name="Sasakawa C."/>
            <person name="Ogasawara N."/>
            <person name="Yasunaga T."/>
            <person name="Kuhara S."/>
            <person name="Shiba T."/>
            <person name="Hattori M."/>
            <person name="Shinagawa H."/>
        </authorList>
    </citation>
    <scope>NUCLEOTIDE SEQUENCE [LARGE SCALE GENOMIC DNA]</scope>
    <source>
        <strain>O157:H7 / Sakai / RIMD 0509952 / EHEC</strain>
    </source>
</reference>
<organism>
    <name type="scientific">Escherichia coli O157:H7</name>
    <dbReference type="NCBI Taxonomy" id="83334"/>
    <lineage>
        <taxon>Bacteria</taxon>
        <taxon>Pseudomonadati</taxon>
        <taxon>Pseudomonadota</taxon>
        <taxon>Gammaproteobacteria</taxon>
        <taxon>Enterobacterales</taxon>
        <taxon>Enterobacteriaceae</taxon>
        <taxon>Escherichia</taxon>
    </lineage>
</organism>
<name>RL13_ECO57</name>
<evidence type="ECO:0000255" key="1">
    <source>
        <dbReference type="HAMAP-Rule" id="MF_01366"/>
    </source>
</evidence>
<evidence type="ECO:0000305" key="2"/>
<accession>P0AA12</accession>
<accession>P02410</accession>
<comment type="function">
    <text evidence="1">This protein is one of the early assembly proteins of the 50S ribosomal subunit, although it is not seen to bind rRNA by itself. It is important during the early stages of 50S assembly.</text>
</comment>
<comment type="subunit">
    <text evidence="1">Part of the 50S ribosomal subunit.</text>
</comment>
<comment type="similarity">
    <text evidence="1">Belongs to the universal ribosomal protein uL13 family.</text>
</comment>